<proteinExistence type="evidence at transcript level"/>
<protein>
    <recommendedName>
        <fullName>Cytochrome P450 12b1, mitochondrial</fullName>
        <ecNumber>1.14.-.-</ecNumber>
    </recommendedName>
    <alternativeName>
        <fullName>CYPXIIB1</fullName>
    </alternativeName>
</protein>
<sequence>MWKFAIHSQQPFCWQQLCNRRHLYVGNVQQQTHLELLDAAPTRSDDEWLQAKPYEKVPGPGTWQVLSYFLPGGKQYNTNLIQMNRRMREWYGDIYRFPGLMGKQDVIFTYNPNDFELTYRNEGVWPIRIGLESFTYYRKVHRPEVFGSIGGLVSEQGKDWAHIRNKVNPVQMRVQNVRQNLPQIDQISREFVDKLDTLRDPVTHILNDNFHEQLKMWAFESISFVALNTRMGLLSDRPDPNAARLAEHMTDFFNYSFKYDVQPSIWPYYKTPGFKKFLQTYDKITEITTAYIDEAIKRFEIEKDSGNECVLQQLLSLNKKVAVVMAMYMLMAGIDTTSSAFVTILYHLARNPHKQRQLHRERRRILPDSDEPLTPENTKNMPYLRACIKECMRITSITPGNFRIATKDLVLSGYRVPRGEGVLMGVLELSNSEKYFGQSGQFMPERWLKADTDPDVKACPAARSRNPFVYLAFGFGPRTCIGKRIAELEMETLLTRLLRRYQVSWLAEMPLQYESNIILSPHGIYVQVRAAC</sequence>
<gene>
    <name type="primary">Cyp12b1</name>
</gene>
<name>C12B1_DROAC</name>
<organism>
    <name type="scientific">Drosophila acanthoptera</name>
    <name type="common">Fruit fly</name>
    <dbReference type="NCBI Taxonomy" id="51166"/>
    <lineage>
        <taxon>Eukaryota</taxon>
        <taxon>Metazoa</taxon>
        <taxon>Ecdysozoa</taxon>
        <taxon>Arthropoda</taxon>
        <taxon>Hexapoda</taxon>
        <taxon>Insecta</taxon>
        <taxon>Pterygota</taxon>
        <taxon>Neoptera</taxon>
        <taxon>Endopterygota</taxon>
        <taxon>Diptera</taxon>
        <taxon>Brachycera</taxon>
        <taxon>Muscomorpha</taxon>
        <taxon>Ephydroidea</taxon>
        <taxon>Drosophilidae</taxon>
        <taxon>Drosophila</taxon>
    </lineage>
</organism>
<evidence type="ECO:0000250" key="1"/>
<evidence type="ECO:0000255" key="2"/>
<evidence type="ECO:0000305" key="3"/>
<keyword id="KW-0349">Heme</keyword>
<keyword id="KW-0408">Iron</keyword>
<keyword id="KW-0479">Metal-binding</keyword>
<keyword id="KW-0496">Mitochondrion</keyword>
<keyword id="KW-0503">Monooxygenase</keyword>
<keyword id="KW-0560">Oxidoreductase</keyword>
<keyword id="KW-0809">Transit peptide</keyword>
<comment type="function">
    <text>Probably involved in steroid hormones biosynthesis.</text>
</comment>
<comment type="cofactor">
    <cofactor evidence="1">
        <name>heme</name>
        <dbReference type="ChEBI" id="CHEBI:30413"/>
    </cofactor>
</comment>
<comment type="subcellular location">
    <subcellularLocation>
        <location evidence="3">Mitochondrion</location>
    </subcellularLocation>
</comment>
<comment type="similarity">
    <text evidence="3">Belongs to the cytochrome P450 family.</text>
</comment>
<feature type="transit peptide" description="Mitochondrion" evidence="1">
    <location>
        <begin position="1"/>
        <end status="unknown"/>
    </location>
</feature>
<feature type="chain" id="PRO_0000003610" description="Cytochrome P450 12b1, mitochondrial">
    <location>
        <begin status="unknown"/>
        <end position="532"/>
    </location>
</feature>
<feature type="binding site" description="axial binding residue" evidence="2">
    <location>
        <position position="480"/>
    </location>
    <ligand>
        <name>heme</name>
        <dbReference type="ChEBI" id="CHEBI:30413"/>
    </ligand>
    <ligandPart>
        <name>Fe</name>
        <dbReference type="ChEBI" id="CHEBI:18248"/>
    </ligandPart>
</feature>
<accession>O44220</accession>
<reference key="1">
    <citation type="journal article" date="1997" name="Insect Biochem. Mol. Biol.">
        <title>Isolation and sequence analysis of cytochrome P450 12B1: the first mitochondrial insect P450 with homology to 1 alpha,25 dihydroxy-D3 24-hydroxylase.</title>
        <authorList>
            <person name="Danielson P.B."/>
            <person name="Fogleman J.C."/>
        </authorList>
    </citation>
    <scope>NUCLEOTIDE SEQUENCE [MRNA]</scope>
    <source>
        <strain>A584.2</strain>
    </source>
</reference>
<dbReference type="EC" id="1.14.-.-"/>
<dbReference type="EMBL" id="U78485">
    <property type="protein sequence ID" value="AAB88725.1"/>
    <property type="molecule type" value="mRNA"/>
</dbReference>
<dbReference type="SMR" id="O44220"/>
<dbReference type="GO" id="GO:0005739">
    <property type="term" value="C:mitochondrion"/>
    <property type="evidence" value="ECO:0007669"/>
    <property type="project" value="UniProtKB-SubCell"/>
</dbReference>
<dbReference type="GO" id="GO:0020037">
    <property type="term" value="F:heme binding"/>
    <property type="evidence" value="ECO:0007669"/>
    <property type="project" value="InterPro"/>
</dbReference>
<dbReference type="GO" id="GO:0005506">
    <property type="term" value="F:iron ion binding"/>
    <property type="evidence" value="ECO:0007669"/>
    <property type="project" value="InterPro"/>
</dbReference>
<dbReference type="GO" id="GO:0004497">
    <property type="term" value="F:monooxygenase activity"/>
    <property type="evidence" value="ECO:0007669"/>
    <property type="project" value="UniProtKB-KW"/>
</dbReference>
<dbReference type="GO" id="GO:0016705">
    <property type="term" value="F:oxidoreductase activity, acting on paired donors, with incorporation or reduction of molecular oxygen"/>
    <property type="evidence" value="ECO:0007669"/>
    <property type="project" value="InterPro"/>
</dbReference>
<dbReference type="CDD" id="cd11054">
    <property type="entry name" value="CYP24A1-like"/>
    <property type="match status" value="1"/>
</dbReference>
<dbReference type="FunFam" id="1.10.630.10:FF:000006">
    <property type="entry name" value="Cytochrome P450 302a1, mitochondrial"/>
    <property type="match status" value="1"/>
</dbReference>
<dbReference type="Gene3D" id="1.10.630.10">
    <property type="entry name" value="Cytochrome P450"/>
    <property type="match status" value="1"/>
</dbReference>
<dbReference type="InterPro" id="IPR050479">
    <property type="entry name" value="CYP11_CYP27_families"/>
</dbReference>
<dbReference type="InterPro" id="IPR001128">
    <property type="entry name" value="Cyt_P450"/>
</dbReference>
<dbReference type="InterPro" id="IPR017972">
    <property type="entry name" value="Cyt_P450_CS"/>
</dbReference>
<dbReference type="InterPro" id="IPR002401">
    <property type="entry name" value="Cyt_P450_E_grp-I"/>
</dbReference>
<dbReference type="InterPro" id="IPR036396">
    <property type="entry name" value="Cyt_P450_sf"/>
</dbReference>
<dbReference type="PANTHER" id="PTHR24279">
    <property type="entry name" value="CYTOCHROME P450"/>
    <property type="match status" value="1"/>
</dbReference>
<dbReference type="PANTHER" id="PTHR24279:SF120">
    <property type="entry name" value="CYTOCHROME P450"/>
    <property type="match status" value="1"/>
</dbReference>
<dbReference type="Pfam" id="PF00067">
    <property type="entry name" value="p450"/>
    <property type="match status" value="1"/>
</dbReference>
<dbReference type="PRINTS" id="PR00463">
    <property type="entry name" value="EP450I"/>
</dbReference>
<dbReference type="PRINTS" id="PR00385">
    <property type="entry name" value="P450"/>
</dbReference>
<dbReference type="SUPFAM" id="SSF48264">
    <property type="entry name" value="Cytochrome P450"/>
    <property type="match status" value="1"/>
</dbReference>
<dbReference type="PROSITE" id="PS00086">
    <property type="entry name" value="CYTOCHROME_P450"/>
    <property type="match status" value="1"/>
</dbReference>